<protein>
    <recommendedName>
        <fullName>Hemoglobin subunit alpha-1</fullName>
    </recommendedName>
    <alternativeName>
        <fullName>Alpha-1-globin</fullName>
    </alternativeName>
    <alternativeName>
        <fullName>Hb 1</fullName>
    </alternativeName>
    <alternativeName>
        <fullName>Hemoglobin alpha-1 chain</fullName>
    </alternativeName>
</protein>
<accession>P82111</accession>
<dbReference type="SMR" id="P82111"/>
<dbReference type="GO" id="GO:0072562">
    <property type="term" value="C:blood microparticle"/>
    <property type="evidence" value="ECO:0007669"/>
    <property type="project" value="TreeGrafter"/>
</dbReference>
<dbReference type="GO" id="GO:0031838">
    <property type="term" value="C:haptoglobin-hemoglobin complex"/>
    <property type="evidence" value="ECO:0007669"/>
    <property type="project" value="TreeGrafter"/>
</dbReference>
<dbReference type="GO" id="GO:0005833">
    <property type="term" value="C:hemoglobin complex"/>
    <property type="evidence" value="ECO:0007669"/>
    <property type="project" value="InterPro"/>
</dbReference>
<dbReference type="GO" id="GO:0031720">
    <property type="term" value="F:haptoglobin binding"/>
    <property type="evidence" value="ECO:0007669"/>
    <property type="project" value="TreeGrafter"/>
</dbReference>
<dbReference type="GO" id="GO:0020037">
    <property type="term" value="F:heme binding"/>
    <property type="evidence" value="ECO:0007669"/>
    <property type="project" value="InterPro"/>
</dbReference>
<dbReference type="GO" id="GO:0005506">
    <property type="term" value="F:iron ion binding"/>
    <property type="evidence" value="ECO:0007669"/>
    <property type="project" value="InterPro"/>
</dbReference>
<dbReference type="GO" id="GO:0043177">
    <property type="term" value="F:organic acid binding"/>
    <property type="evidence" value="ECO:0007669"/>
    <property type="project" value="TreeGrafter"/>
</dbReference>
<dbReference type="GO" id="GO:0019825">
    <property type="term" value="F:oxygen binding"/>
    <property type="evidence" value="ECO:0007669"/>
    <property type="project" value="InterPro"/>
</dbReference>
<dbReference type="GO" id="GO:0005344">
    <property type="term" value="F:oxygen carrier activity"/>
    <property type="evidence" value="ECO:0007669"/>
    <property type="project" value="UniProtKB-KW"/>
</dbReference>
<dbReference type="GO" id="GO:0004601">
    <property type="term" value="F:peroxidase activity"/>
    <property type="evidence" value="ECO:0007669"/>
    <property type="project" value="TreeGrafter"/>
</dbReference>
<dbReference type="GO" id="GO:0042744">
    <property type="term" value="P:hydrogen peroxide catabolic process"/>
    <property type="evidence" value="ECO:0007669"/>
    <property type="project" value="TreeGrafter"/>
</dbReference>
<dbReference type="CDD" id="cd08927">
    <property type="entry name" value="Hb-alpha-like"/>
    <property type="match status" value="1"/>
</dbReference>
<dbReference type="FunFam" id="1.10.490.10:FF:000002">
    <property type="entry name" value="Hemoglobin subunit alpha"/>
    <property type="match status" value="1"/>
</dbReference>
<dbReference type="Gene3D" id="1.10.490.10">
    <property type="entry name" value="Globins"/>
    <property type="match status" value="1"/>
</dbReference>
<dbReference type="InterPro" id="IPR000971">
    <property type="entry name" value="Globin"/>
</dbReference>
<dbReference type="InterPro" id="IPR009050">
    <property type="entry name" value="Globin-like_sf"/>
</dbReference>
<dbReference type="InterPro" id="IPR012292">
    <property type="entry name" value="Globin/Proto"/>
</dbReference>
<dbReference type="InterPro" id="IPR002338">
    <property type="entry name" value="Hemoglobin_a-typ"/>
</dbReference>
<dbReference type="InterPro" id="IPR050056">
    <property type="entry name" value="Hemoglobin_oxygen_transport"/>
</dbReference>
<dbReference type="InterPro" id="IPR002339">
    <property type="entry name" value="Hemoglobin_pi"/>
</dbReference>
<dbReference type="PANTHER" id="PTHR11442">
    <property type="entry name" value="HEMOGLOBIN FAMILY MEMBER"/>
    <property type="match status" value="1"/>
</dbReference>
<dbReference type="PANTHER" id="PTHR11442:SF48">
    <property type="entry name" value="HEMOGLOBIN SUBUNIT ALPHA"/>
    <property type="match status" value="1"/>
</dbReference>
<dbReference type="Pfam" id="PF00042">
    <property type="entry name" value="Globin"/>
    <property type="match status" value="1"/>
</dbReference>
<dbReference type="PRINTS" id="PR00612">
    <property type="entry name" value="ALPHAHAEM"/>
</dbReference>
<dbReference type="PRINTS" id="PR00815">
    <property type="entry name" value="PIHAEM"/>
</dbReference>
<dbReference type="SUPFAM" id="SSF46458">
    <property type="entry name" value="Globin-like"/>
    <property type="match status" value="1"/>
</dbReference>
<dbReference type="PROSITE" id="PS01033">
    <property type="entry name" value="GLOBIN"/>
    <property type="match status" value="1"/>
</dbReference>
<keyword id="KW-0903">Direct protein sequencing</keyword>
<keyword id="KW-0349">Heme</keyword>
<keyword id="KW-0408">Iron</keyword>
<keyword id="KW-0479">Metal-binding</keyword>
<keyword id="KW-0561">Oxygen transport</keyword>
<keyword id="KW-0813">Transport</keyword>
<comment type="function">
    <text>Involved in oxygen transport from the lung to the various peripheral tissues.</text>
</comment>
<comment type="subunit">
    <text>Heterotetramer of two alpha chains and two beta chains.</text>
</comment>
<comment type="tissue specificity">
    <text>Red blood cells.</text>
</comment>
<comment type="similarity">
    <text evidence="1">Belongs to the globin family.</text>
</comment>
<feature type="chain" id="PRO_0000052589" description="Hemoglobin subunit alpha-1">
    <location>
        <begin position="1"/>
        <end position="141"/>
    </location>
</feature>
<feature type="domain" description="Globin" evidence="1">
    <location>
        <begin position="1"/>
        <end position="141"/>
    </location>
</feature>
<feature type="binding site" evidence="1">
    <location>
        <position position="58"/>
    </location>
    <ligand>
        <name>O2</name>
        <dbReference type="ChEBI" id="CHEBI:15379"/>
    </ligand>
</feature>
<feature type="binding site" description="proximal binding residue" evidence="1">
    <location>
        <position position="87"/>
    </location>
    <ligand>
        <name>heme b</name>
        <dbReference type="ChEBI" id="CHEBI:60344"/>
    </ligand>
    <ligandPart>
        <name>Fe</name>
        <dbReference type="ChEBI" id="CHEBI:18248"/>
    </ligandPart>
</feature>
<evidence type="ECO:0000255" key="1">
    <source>
        <dbReference type="PROSITE-ProRule" id="PRU00238"/>
    </source>
</evidence>
<name>HBA1_STEMC</name>
<proteinExistence type="evidence at protein level"/>
<sequence>VLSGSDKNNVKGVFGKIGGHAEEYGAETLERMFATYPQTKTYFPHFDLQHGSAQVKAHGKKVAAALVEAANHIDDISGALSKLSDLHAQKLRVDPVNFKLLGQCFLVVVAIHHPSVLTPEVHASLDKFLCAVGNVLTAKYR</sequence>
<organism>
    <name type="scientific">Stercorarius maccormicki</name>
    <name type="common">South polar skua</name>
    <name type="synonym">Catharacta maccormicki</name>
    <dbReference type="NCBI Taxonomy" id="395889"/>
    <lineage>
        <taxon>Eukaryota</taxon>
        <taxon>Metazoa</taxon>
        <taxon>Chordata</taxon>
        <taxon>Craniata</taxon>
        <taxon>Vertebrata</taxon>
        <taxon>Euteleostomi</taxon>
        <taxon>Archelosauria</taxon>
        <taxon>Archosauria</taxon>
        <taxon>Dinosauria</taxon>
        <taxon>Saurischia</taxon>
        <taxon>Theropoda</taxon>
        <taxon>Coelurosauria</taxon>
        <taxon>Aves</taxon>
        <taxon>Neognathae</taxon>
        <taxon>Neoaves</taxon>
        <taxon>Charadriiformes</taxon>
        <taxon>Stercorariidae</taxon>
        <taxon>Stercorarius</taxon>
    </lineage>
</organism>
<reference key="1">
    <citation type="journal article" date="2000" name="Eur. J. Biochem.">
        <title>Structural and functional analysis of the two haemoglobins of the antarctic seabird Catharacta maccormicki. Characterization of an additional phosphate binding site by molecular modelling.</title>
        <authorList>
            <person name="Tamburrini M."/>
            <person name="Riccio A."/>
            <person name="Romano M."/>
            <person name="Giardina B."/>
            <person name="di Prisco G."/>
        </authorList>
    </citation>
    <scope>PROTEIN SEQUENCE</scope>
    <source>
        <tissue>Blood</tissue>
    </source>
</reference>